<name>NU1M_OSPRO</name>
<sequence length="318" mass="35709">MFVINLLLYIVPILLAVAFLTLVERKVLGYMQFRKGPNIVGPYGLLQPIADAVKLFTKEPLRPLTSSVSMFIIAPILALTLALTIWTPLPMPHALIDLNLGLLFILSLSGLSVYSILWSGWASNSKYALIGALRAVAQTISYEVTLAIILLSIMLINGSFTLKNLIITQENMWLIVATWPLAMMWYISTLAETNRAPFDLTEGESELVSGFNVEYAAGPFAMFFLAEYANIMAMNAMTAILFLGSSLNHNLSHLNTLSFMLKTLFLTFMFLWIRASYPRFRYDQLMHLLWKNFLPLTLALCLWFISIPIALSCIPPQI</sequence>
<organism>
    <name type="scientific">Osphranter robustus</name>
    <name type="common">Wallaroo</name>
    <name type="synonym">Macropus robustus</name>
    <dbReference type="NCBI Taxonomy" id="9319"/>
    <lineage>
        <taxon>Eukaryota</taxon>
        <taxon>Metazoa</taxon>
        <taxon>Chordata</taxon>
        <taxon>Craniata</taxon>
        <taxon>Vertebrata</taxon>
        <taxon>Euteleostomi</taxon>
        <taxon>Mammalia</taxon>
        <taxon>Metatheria</taxon>
        <taxon>Diprotodontia</taxon>
        <taxon>Macropodidae</taxon>
        <taxon>Osphranter</taxon>
    </lineage>
</organism>
<accession>P92659</accession>
<dbReference type="EC" id="7.1.1.2" evidence="1"/>
<dbReference type="EMBL" id="Y10524">
    <property type="protein sequence ID" value="CAA71536.1"/>
    <property type="molecule type" value="Genomic_DNA"/>
</dbReference>
<dbReference type="PIR" id="T11428">
    <property type="entry name" value="T11428"/>
</dbReference>
<dbReference type="RefSeq" id="NP_007394.1">
    <property type="nucleotide sequence ID" value="NC_001794.1"/>
</dbReference>
<dbReference type="SMR" id="P92659"/>
<dbReference type="GeneID" id="808069"/>
<dbReference type="CTD" id="4535"/>
<dbReference type="GO" id="GO:0005743">
    <property type="term" value="C:mitochondrial inner membrane"/>
    <property type="evidence" value="ECO:0000250"/>
    <property type="project" value="UniProtKB"/>
</dbReference>
<dbReference type="GO" id="GO:0008137">
    <property type="term" value="F:NADH dehydrogenase (ubiquinone) activity"/>
    <property type="evidence" value="ECO:0000250"/>
    <property type="project" value="UniProtKB"/>
</dbReference>
<dbReference type="GO" id="GO:0006120">
    <property type="term" value="P:mitochondrial electron transport, NADH to ubiquinone"/>
    <property type="evidence" value="ECO:0000250"/>
    <property type="project" value="UniProtKB"/>
</dbReference>
<dbReference type="GO" id="GO:0032981">
    <property type="term" value="P:mitochondrial respiratory chain complex I assembly"/>
    <property type="evidence" value="ECO:0000250"/>
    <property type="project" value="UniProtKB"/>
</dbReference>
<dbReference type="HAMAP" id="MF_01350">
    <property type="entry name" value="NDH1_NuoH"/>
    <property type="match status" value="1"/>
</dbReference>
<dbReference type="InterPro" id="IPR001694">
    <property type="entry name" value="NADH_UbQ_OxRdtase_su1/FPO"/>
</dbReference>
<dbReference type="InterPro" id="IPR018086">
    <property type="entry name" value="NADH_UbQ_OxRdtase_su1_CS"/>
</dbReference>
<dbReference type="PANTHER" id="PTHR11432">
    <property type="entry name" value="NADH DEHYDROGENASE SUBUNIT 1"/>
    <property type="match status" value="1"/>
</dbReference>
<dbReference type="PANTHER" id="PTHR11432:SF3">
    <property type="entry name" value="NADH-UBIQUINONE OXIDOREDUCTASE CHAIN 1"/>
    <property type="match status" value="1"/>
</dbReference>
<dbReference type="Pfam" id="PF00146">
    <property type="entry name" value="NADHdh"/>
    <property type="match status" value="1"/>
</dbReference>
<dbReference type="PROSITE" id="PS00667">
    <property type="entry name" value="COMPLEX1_ND1_1"/>
    <property type="match status" value="1"/>
</dbReference>
<dbReference type="PROSITE" id="PS00668">
    <property type="entry name" value="COMPLEX1_ND1_2"/>
    <property type="match status" value="1"/>
</dbReference>
<gene>
    <name type="primary">MT-ND1</name>
    <name type="synonym">MTND1</name>
    <name type="synonym">NADH1</name>
    <name type="synonym">ND1</name>
</gene>
<feature type="chain" id="PRO_0000117425" description="NADH-ubiquinone oxidoreductase chain 1">
    <location>
        <begin position="1"/>
        <end position="318"/>
    </location>
</feature>
<feature type="transmembrane region" description="Helical" evidence="3">
    <location>
        <begin position="2"/>
        <end position="22"/>
    </location>
</feature>
<feature type="transmembrane region" description="Helical" evidence="3">
    <location>
        <begin position="70"/>
        <end position="90"/>
    </location>
</feature>
<feature type="transmembrane region" description="Helical" evidence="3">
    <location>
        <begin position="100"/>
        <end position="120"/>
    </location>
</feature>
<feature type="transmembrane region" description="Helical" evidence="3">
    <location>
        <begin position="136"/>
        <end position="156"/>
    </location>
</feature>
<feature type="transmembrane region" description="Helical" evidence="3">
    <location>
        <begin position="172"/>
        <end position="192"/>
    </location>
</feature>
<feature type="transmembrane region" description="Helical" evidence="3">
    <location>
        <begin position="223"/>
        <end position="243"/>
    </location>
</feature>
<feature type="transmembrane region" description="Helical" evidence="3">
    <location>
        <begin position="253"/>
        <end position="273"/>
    </location>
</feature>
<feature type="transmembrane region" description="Helical" evidence="3">
    <location>
        <begin position="294"/>
        <end position="314"/>
    </location>
</feature>
<evidence type="ECO:0000250" key="1">
    <source>
        <dbReference type="UniProtKB" id="P03886"/>
    </source>
</evidence>
<evidence type="ECO:0000250" key="2">
    <source>
        <dbReference type="UniProtKB" id="P03887"/>
    </source>
</evidence>
<evidence type="ECO:0000255" key="3"/>
<evidence type="ECO:0000305" key="4"/>
<protein>
    <recommendedName>
        <fullName>NADH-ubiquinone oxidoreductase chain 1</fullName>
        <ecNumber evidence="1">7.1.1.2</ecNumber>
    </recommendedName>
    <alternativeName>
        <fullName>NADH dehydrogenase subunit 1</fullName>
    </alternativeName>
</protein>
<keyword id="KW-0249">Electron transport</keyword>
<keyword id="KW-0472">Membrane</keyword>
<keyword id="KW-0496">Mitochondrion</keyword>
<keyword id="KW-0999">Mitochondrion inner membrane</keyword>
<keyword id="KW-0520">NAD</keyword>
<keyword id="KW-0679">Respiratory chain</keyword>
<keyword id="KW-1278">Translocase</keyword>
<keyword id="KW-0812">Transmembrane</keyword>
<keyword id="KW-1133">Transmembrane helix</keyword>
<keyword id="KW-0813">Transport</keyword>
<keyword id="KW-0830">Ubiquinone</keyword>
<proteinExistence type="inferred from homology"/>
<reference key="1">
    <citation type="journal article" date="1997" name="Proc. Natl. Acad. Sci. U.S.A.">
        <title>The complete mitochondrial genome of the wallaroo (Macropus robustus) and the phylogenetic relationship among Monotremata, Marsupialia, and Eutheria.</title>
        <authorList>
            <person name="Janke A."/>
            <person name="Xu X."/>
            <person name="Arnason U."/>
        </authorList>
    </citation>
    <scope>NUCLEOTIDE SEQUENCE [GENOMIC DNA]</scope>
</reference>
<comment type="function">
    <text evidence="1">Core subunit of the mitochondrial membrane respiratory chain NADH dehydrogenase (Complex I) which catalyzes electron transfer from NADH through the respiratory chain, using ubiquinone as an electron acceptor. Essential for the catalytic activity and assembly of complex I.</text>
</comment>
<comment type="catalytic activity">
    <reaction evidence="1">
        <text>a ubiquinone + NADH + 5 H(+)(in) = a ubiquinol + NAD(+) + 4 H(+)(out)</text>
        <dbReference type="Rhea" id="RHEA:29091"/>
        <dbReference type="Rhea" id="RHEA-COMP:9565"/>
        <dbReference type="Rhea" id="RHEA-COMP:9566"/>
        <dbReference type="ChEBI" id="CHEBI:15378"/>
        <dbReference type="ChEBI" id="CHEBI:16389"/>
        <dbReference type="ChEBI" id="CHEBI:17976"/>
        <dbReference type="ChEBI" id="CHEBI:57540"/>
        <dbReference type="ChEBI" id="CHEBI:57945"/>
        <dbReference type="EC" id="7.1.1.2"/>
    </reaction>
</comment>
<comment type="subunit">
    <text evidence="2">Core subunit of respiratory chain NADH dehydrogenase (Complex I) which is composed of 45 different subunits.</text>
</comment>
<comment type="subcellular location">
    <subcellularLocation>
        <location evidence="2">Mitochondrion inner membrane</location>
        <topology evidence="3">Multi-pass membrane protein</topology>
    </subcellularLocation>
</comment>
<comment type="similarity">
    <text evidence="4">Belongs to the complex I subunit 1 family.</text>
</comment>
<geneLocation type="mitochondrion"/>